<gene>
    <name type="primary">gfap</name>
</gene>
<comment type="similarity">
    <text evidence="1">Belongs to the intermediate filament family.</text>
</comment>
<comment type="sequence caution" evidence="2">
    <conflict type="erroneous initiation">
        <sequence resource="EMBL-CDS" id="AAA49166"/>
    </conflict>
</comment>
<keyword id="KW-0175">Coiled coil</keyword>
<keyword id="KW-0403">Intermediate filament</keyword>
<keyword id="KW-1185">Reference proteome</keyword>
<name>GFAP_CARAU</name>
<feature type="chain" id="PRO_0000063808" description="Glial fibrillary acidic protein">
    <location>
        <begin position="1" status="less than"/>
        <end position="365"/>
    </location>
</feature>
<feature type="domain" description="IF rod" evidence="1">
    <location>
        <begin position="2"/>
        <end position="310"/>
    </location>
</feature>
<feature type="region of interest" description="Head">
    <location>
        <begin position="1" status="less than"/>
        <end position="5"/>
    </location>
</feature>
<feature type="region of interest" description="Coil 1A">
    <location>
        <begin position="6"/>
        <end position="37"/>
    </location>
</feature>
<feature type="region of interest" description="Linker 1">
    <location>
        <begin position="38"/>
        <end position="48"/>
    </location>
</feature>
<feature type="region of interest" description="Coil 1B">
    <location>
        <begin position="49"/>
        <end position="147"/>
    </location>
</feature>
<feature type="region of interest" description="Linker 12">
    <location>
        <begin position="148"/>
        <end position="163"/>
    </location>
</feature>
<feature type="region of interest" description="Coil 2A">
    <location>
        <begin position="164"/>
        <end position="185"/>
    </location>
</feature>
<feature type="region of interest" description="Linker 2">
    <location>
        <begin position="186"/>
        <end position="189"/>
    </location>
</feature>
<feature type="region of interest" description="Coil 2B">
    <location>
        <begin position="190"/>
        <end position="310"/>
    </location>
</feature>
<feature type="region of interest" description="Tail">
    <location>
        <begin position="311"/>
        <end position="365"/>
    </location>
</feature>
<feature type="non-terminal residue">
    <location>
        <position position="1"/>
    </location>
</feature>
<sequence>REVDRVMGLNDRFASYIEKVRFLEQQNKMLVAELNQLRGKEPSRLGDIYQEELRELRRQVDGLNAGKARLEIERDNLASDLATLKQRLQEENALRQEAENNLNTFRQDVDEAALNRVQLERKIDALQDEISFLRKVHEEEMRQLQEQLIAQQVHVDLDVSKPDLTTALKEIRAQFEAMATSNMQETEEWYRSKFADLTDAAGRNAEALRQAKQEANEYRRQIQGLTCDLESLRGSNESLERQLREMEERFAIETAGYQDTVARLEDEIQMLKEEMARHLQEYQDLLNVKLALDIEIATYRKLLEGEESRITVPVQNFTNLQFRDTSLDTKLTPEAHVKRSIVVRTVETRDGEIIKESTTERKDLP</sequence>
<reference key="1">
    <citation type="submission" date="1993-09" db="EMBL/GenBank/DDBJ databases">
        <title>Nucleotide sequence of a GFAP-like intermediate filament cDNA from Goldfish retina.</title>
        <authorList>
            <person name="Glasgow E."/>
            <person name="Schechter N."/>
        </authorList>
    </citation>
    <scope>NUCLEOTIDE SEQUENCE [MRNA]</scope>
    <source>
        <tissue>Retina</tissue>
    </source>
</reference>
<evidence type="ECO:0000255" key="1">
    <source>
        <dbReference type="PROSITE-ProRule" id="PRU01188"/>
    </source>
</evidence>
<evidence type="ECO:0000305" key="2"/>
<protein>
    <recommendedName>
        <fullName>Glial fibrillary acidic protein</fullName>
        <shortName>GFAP</shortName>
    </recommendedName>
</protein>
<accession>P48677</accession>
<dbReference type="EMBL" id="L23876">
    <property type="protein sequence ID" value="AAA49166.1"/>
    <property type="status" value="ALT_INIT"/>
    <property type="molecule type" value="mRNA"/>
</dbReference>
<dbReference type="SMR" id="P48677"/>
<dbReference type="Proteomes" id="UP000515129">
    <property type="component" value="Unplaced"/>
</dbReference>
<dbReference type="GO" id="GO:0042995">
    <property type="term" value="C:cell projection"/>
    <property type="evidence" value="ECO:0007669"/>
    <property type="project" value="TreeGrafter"/>
</dbReference>
<dbReference type="GO" id="GO:0005737">
    <property type="term" value="C:cytoplasm"/>
    <property type="evidence" value="ECO:0007669"/>
    <property type="project" value="TreeGrafter"/>
</dbReference>
<dbReference type="GO" id="GO:0005882">
    <property type="term" value="C:intermediate filament"/>
    <property type="evidence" value="ECO:0007669"/>
    <property type="project" value="UniProtKB-KW"/>
</dbReference>
<dbReference type="GO" id="GO:0005200">
    <property type="term" value="F:structural constituent of cytoskeleton"/>
    <property type="evidence" value="ECO:0007669"/>
    <property type="project" value="TreeGrafter"/>
</dbReference>
<dbReference type="GO" id="GO:0045109">
    <property type="term" value="P:intermediate filament organization"/>
    <property type="evidence" value="ECO:0007669"/>
    <property type="project" value="TreeGrafter"/>
</dbReference>
<dbReference type="GO" id="GO:1904714">
    <property type="term" value="P:regulation of chaperone-mediated autophagy"/>
    <property type="evidence" value="ECO:0007669"/>
    <property type="project" value="TreeGrafter"/>
</dbReference>
<dbReference type="FunFam" id="1.20.5.1160:FF:000001">
    <property type="entry name" value="Keratin type II"/>
    <property type="match status" value="1"/>
</dbReference>
<dbReference type="FunFam" id="1.20.5.170:FF:000002">
    <property type="entry name" value="Type I keratin KA11"/>
    <property type="match status" value="1"/>
</dbReference>
<dbReference type="FunFam" id="1.20.5.500:FF:000001">
    <property type="entry name" value="Type II keratin 23"/>
    <property type="match status" value="1"/>
</dbReference>
<dbReference type="Gene3D" id="1.20.5.170">
    <property type="match status" value="1"/>
</dbReference>
<dbReference type="Gene3D" id="1.20.5.500">
    <property type="entry name" value="Single helix bin"/>
    <property type="match status" value="1"/>
</dbReference>
<dbReference type="Gene3D" id="1.20.5.1160">
    <property type="entry name" value="Vasodilator-stimulated phosphoprotein"/>
    <property type="match status" value="1"/>
</dbReference>
<dbReference type="InterPro" id="IPR018039">
    <property type="entry name" value="IF_conserved"/>
</dbReference>
<dbReference type="InterPro" id="IPR039008">
    <property type="entry name" value="IF_rod_dom"/>
</dbReference>
<dbReference type="InterPro" id="IPR050405">
    <property type="entry name" value="Intermediate_filament"/>
</dbReference>
<dbReference type="InterPro" id="IPR002957">
    <property type="entry name" value="Keratin_I"/>
</dbReference>
<dbReference type="PANTHER" id="PTHR45652">
    <property type="entry name" value="GLIAL FIBRILLARY ACIDIC PROTEIN"/>
    <property type="match status" value="1"/>
</dbReference>
<dbReference type="PANTHER" id="PTHR45652:SF9">
    <property type="entry name" value="GLIAL FIBRILLARY ACIDIC PROTEIN"/>
    <property type="match status" value="1"/>
</dbReference>
<dbReference type="Pfam" id="PF00038">
    <property type="entry name" value="Filament"/>
    <property type="match status" value="1"/>
</dbReference>
<dbReference type="PRINTS" id="PR01248">
    <property type="entry name" value="TYPE1KERATIN"/>
</dbReference>
<dbReference type="SMART" id="SM01391">
    <property type="entry name" value="Filament"/>
    <property type="match status" value="1"/>
</dbReference>
<dbReference type="SUPFAM" id="SSF64593">
    <property type="entry name" value="Intermediate filament protein, coiled coil region"/>
    <property type="match status" value="2"/>
</dbReference>
<dbReference type="SUPFAM" id="SSF90257">
    <property type="entry name" value="Myosin rod fragments"/>
    <property type="match status" value="1"/>
</dbReference>
<dbReference type="PROSITE" id="PS00226">
    <property type="entry name" value="IF_ROD_1"/>
    <property type="match status" value="1"/>
</dbReference>
<dbReference type="PROSITE" id="PS51842">
    <property type="entry name" value="IF_ROD_2"/>
    <property type="match status" value="1"/>
</dbReference>
<organism>
    <name type="scientific">Carassius auratus</name>
    <name type="common">Goldfish</name>
    <dbReference type="NCBI Taxonomy" id="7957"/>
    <lineage>
        <taxon>Eukaryota</taxon>
        <taxon>Metazoa</taxon>
        <taxon>Chordata</taxon>
        <taxon>Craniata</taxon>
        <taxon>Vertebrata</taxon>
        <taxon>Euteleostomi</taxon>
        <taxon>Actinopterygii</taxon>
        <taxon>Neopterygii</taxon>
        <taxon>Teleostei</taxon>
        <taxon>Ostariophysi</taxon>
        <taxon>Cypriniformes</taxon>
        <taxon>Cyprinidae</taxon>
        <taxon>Cyprininae</taxon>
        <taxon>Carassius</taxon>
    </lineage>
</organism>
<proteinExistence type="evidence at transcript level"/>